<dbReference type="EMBL" id="AF233069">
    <property type="protein sequence ID" value="AAF81683.1"/>
    <property type="molecule type" value="Genomic_DNA"/>
</dbReference>
<dbReference type="SMR" id="Q9MS99"/>
<dbReference type="eggNOG" id="KOG0730">
    <property type="taxonomic scope" value="Eukaryota"/>
</dbReference>
<dbReference type="GO" id="GO:0009507">
    <property type="term" value="C:chloroplast"/>
    <property type="evidence" value="ECO:0007669"/>
    <property type="project" value="UniProtKB-SubCell"/>
</dbReference>
<dbReference type="GO" id="GO:0005524">
    <property type="term" value="F:ATP binding"/>
    <property type="evidence" value="ECO:0007669"/>
    <property type="project" value="UniProtKB-KW"/>
</dbReference>
<dbReference type="GO" id="GO:0016887">
    <property type="term" value="F:ATP hydrolysis activity"/>
    <property type="evidence" value="ECO:0007669"/>
    <property type="project" value="InterPro"/>
</dbReference>
<dbReference type="CDD" id="cd00009">
    <property type="entry name" value="AAA"/>
    <property type="match status" value="1"/>
</dbReference>
<dbReference type="FunFam" id="3.40.50.300:FF:000216">
    <property type="entry name" value="Type VII secretion ATPase EccA"/>
    <property type="match status" value="1"/>
</dbReference>
<dbReference type="Gene3D" id="1.10.8.60">
    <property type="match status" value="1"/>
</dbReference>
<dbReference type="Gene3D" id="3.40.50.300">
    <property type="entry name" value="P-loop containing nucleotide triphosphate hydrolases"/>
    <property type="match status" value="1"/>
</dbReference>
<dbReference type="InterPro" id="IPR003593">
    <property type="entry name" value="AAA+_ATPase"/>
</dbReference>
<dbReference type="InterPro" id="IPR041627">
    <property type="entry name" value="AAA_lid_6"/>
</dbReference>
<dbReference type="InterPro" id="IPR003959">
    <property type="entry name" value="ATPase_AAA_core"/>
</dbReference>
<dbReference type="InterPro" id="IPR000470">
    <property type="entry name" value="CbxX/CfqX_mono"/>
</dbReference>
<dbReference type="InterPro" id="IPR000641">
    <property type="entry name" value="CbxX/CfxQ"/>
</dbReference>
<dbReference type="InterPro" id="IPR050773">
    <property type="entry name" value="CbxX/CfxQ_RuBisCO_ESX"/>
</dbReference>
<dbReference type="InterPro" id="IPR027417">
    <property type="entry name" value="P-loop_NTPase"/>
</dbReference>
<dbReference type="NCBIfam" id="TIGR02880">
    <property type="entry name" value="cbbX_cfxQ"/>
    <property type="match status" value="1"/>
</dbReference>
<dbReference type="PANTHER" id="PTHR43392">
    <property type="entry name" value="AAA-TYPE ATPASE FAMILY PROTEIN / ANKYRIN REPEAT FAMILY PROTEIN"/>
    <property type="match status" value="1"/>
</dbReference>
<dbReference type="PANTHER" id="PTHR43392:SF2">
    <property type="entry name" value="AAA-TYPE ATPASE FAMILY PROTEIN _ ANKYRIN REPEAT FAMILY PROTEIN"/>
    <property type="match status" value="1"/>
</dbReference>
<dbReference type="Pfam" id="PF00004">
    <property type="entry name" value="AAA"/>
    <property type="match status" value="1"/>
</dbReference>
<dbReference type="Pfam" id="PF17866">
    <property type="entry name" value="AAA_lid_6"/>
    <property type="match status" value="1"/>
</dbReference>
<dbReference type="PRINTS" id="PR00819">
    <property type="entry name" value="CBXCFQXSUPER"/>
</dbReference>
<dbReference type="PRINTS" id="PR00820">
    <property type="entry name" value="CBXXCFQX"/>
</dbReference>
<dbReference type="SMART" id="SM00382">
    <property type="entry name" value="AAA"/>
    <property type="match status" value="1"/>
</dbReference>
<dbReference type="SUPFAM" id="SSF52540">
    <property type="entry name" value="P-loop containing nucleoside triphosphate hydrolases"/>
    <property type="match status" value="1"/>
</dbReference>
<feature type="chain" id="PRO_0000063039" description="Protein CfxQ homolog">
    <location>
        <begin position="1"/>
        <end position="305"/>
    </location>
</feature>
<feature type="binding site" evidence="2">
    <location>
        <begin position="83"/>
        <end position="90"/>
    </location>
    <ligand>
        <name>ATP</name>
        <dbReference type="ChEBI" id="CHEBI:30616"/>
    </ligand>
</feature>
<name>CFXQ_GALSU</name>
<organism>
    <name type="scientific">Galdieria sulphuraria</name>
    <name type="common">Red alga</name>
    <dbReference type="NCBI Taxonomy" id="130081"/>
    <lineage>
        <taxon>Eukaryota</taxon>
        <taxon>Rhodophyta</taxon>
        <taxon>Bangiophyceae</taxon>
        <taxon>Galdieriales</taxon>
        <taxon>Galdieriaceae</taxon>
        <taxon>Galdieria</taxon>
    </lineage>
</organism>
<evidence type="ECO:0000250" key="1"/>
<evidence type="ECO:0000255" key="2"/>
<evidence type="ECO:0000305" key="3"/>
<protein>
    <recommendedName>
        <fullName>Protein CfxQ homolog</fullName>
    </recommendedName>
</protein>
<reference key="1">
    <citation type="submission" date="2000-02" db="EMBL/GenBank/DDBJ databases">
        <authorList>
            <person name="Whitney S.M."/>
            <person name="Andrews J."/>
        </authorList>
    </citation>
    <scope>NUCLEOTIDE SEQUENCE [GENOMIC DNA]</scope>
    <source>
        <strain>UTEX 2393</strain>
    </source>
</reference>
<geneLocation type="chloroplast"/>
<gene>
    <name type="primary">cfxQ</name>
</gene>
<keyword id="KW-0067">ATP-binding</keyword>
<keyword id="KW-0150">Chloroplast</keyword>
<keyword id="KW-0547">Nucleotide-binding</keyword>
<keyword id="KW-0934">Plastid</keyword>
<accession>Q9MS99</accession>
<proteinExistence type="inferred from homology"/>
<sequence length="305" mass="35103">MNVITETEYKEENINENTLVNIQEEYKKTKIQEVLNQLDKELIGLTPVKNRIKEIAALLLIDKLRIKLNLPQANPGLHMSFTGSPGTGKTTVATKMADILYLLGYIRKGHLLTVTRDDLVGQYIGHTAPKTKEVLKRAMGGVLFIDEAYYLYKPDNERDYGSEAIEILLQVMENQRNDLVVILAGYKDKMERFYQSNPGLSSRITNHVDFPDYTAEELLEIGIMMLEEQQYQLTEEGKKVLLEYIKRRMTQPHFANARSIRNAIDRARMRQANRIFNSSNRVLTKKDLVTIEAEDILKSSLFMDK</sequence>
<comment type="function">
    <text evidence="1">Necessary for the expression of RuBisCO.</text>
</comment>
<comment type="subcellular location">
    <subcellularLocation>
        <location>Plastid</location>
        <location>Chloroplast</location>
    </subcellularLocation>
</comment>
<comment type="similarity">
    <text evidence="3">Belongs to the CbxX/CfxQ family.</text>
</comment>